<sequence length="123" mass="14449">MANPAHISAVRTLYKKILVLHRFLPIDLRALGDQYVKDEFRRHKTSSDEEAKHFMVEWQNYKDTLQTQVLEAMGNKKLVFGADLSEDKLKHFQDEQIGQLYELMLESTKPNRQFDIQEEGTPK</sequence>
<reference key="1">
    <citation type="submission" date="2004-10" db="EMBL/GenBank/DDBJ databases">
        <authorList>
            <consortium name="NIH - Zebrafish Gene Collection (ZGC) project"/>
        </authorList>
    </citation>
    <scope>NUCLEOTIDE SEQUENCE [LARGE SCALE MRNA]</scope>
    <source>
        <tissue>Brain</tissue>
    </source>
</reference>
<dbReference type="EMBL" id="BC083535">
    <property type="protein sequence ID" value="AAH83535.1"/>
    <property type="molecule type" value="mRNA"/>
</dbReference>
<dbReference type="SMR" id="Q5XIY4"/>
<dbReference type="FunCoup" id="Q5XIY4">
    <property type="interactions" value="1386"/>
</dbReference>
<dbReference type="STRING" id="7955.ENSDARP00000052395"/>
<dbReference type="PaxDb" id="7955-ENSDARP00000052395"/>
<dbReference type="AGR" id="ZFIN:ZDB-GENE-041010-94"/>
<dbReference type="ZFIN" id="ZDB-GENE-041010-94">
    <property type="gene designation" value="sdhaf3"/>
</dbReference>
<dbReference type="eggNOG" id="KOG4100">
    <property type="taxonomic scope" value="Eukaryota"/>
</dbReference>
<dbReference type="InParanoid" id="Q5XIY4"/>
<dbReference type="PhylomeDB" id="Q5XIY4"/>
<dbReference type="PRO" id="PR:Q5XIY4"/>
<dbReference type="Proteomes" id="UP000000437">
    <property type="component" value="Unplaced"/>
</dbReference>
<dbReference type="GO" id="GO:0005758">
    <property type="term" value="C:mitochondrial intermembrane space"/>
    <property type="evidence" value="ECO:0000318"/>
    <property type="project" value="GO_Central"/>
</dbReference>
<dbReference type="GO" id="GO:0005759">
    <property type="term" value="C:mitochondrial matrix"/>
    <property type="evidence" value="ECO:0007669"/>
    <property type="project" value="UniProtKB-SubCell"/>
</dbReference>
<dbReference type="GO" id="GO:0034553">
    <property type="term" value="P:mitochondrial respiratory chain complex II assembly"/>
    <property type="evidence" value="ECO:0000318"/>
    <property type="project" value="GO_Central"/>
</dbReference>
<dbReference type="GO" id="GO:0006105">
    <property type="term" value="P:succinate metabolic process"/>
    <property type="evidence" value="ECO:0000318"/>
    <property type="project" value="GO_Central"/>
</dbReference>
<dbReference type="CDD" id="cd20270">
    <property type="entry name" value="Complex1_LYR_SDHAF3_LYRM10"/>
    <property type="match status" value="1"/>
</dbReference>
<dbReference type="InterPro" id="IPR008381">
    <property type="entry name" value="SDHAF3/Sdh7"/>
</dbReference>
<dbReference type="PANTHER" id="PTHR13137">
    <property type="entry name" value="DC11 ACN9 HOMOLOG"/>
    <property type="match status" value="1"/>
</dbReference>
<dbReference type="PANTHER" id="PTHR13137:SF6">
    <property type="entry name" value="SUCCINATE DEHYDROGENASE ASSEMBLY FACTOR 3, MITOCHONDRIAL"/>
    <property type="match status" value="1"/>
</dbReference>
<dbReference type="Pfam" id="PF13233">
    <property type="entry name" value="Complex1_LYR_2"/>
    <property type="match status" value="1"/>
</dbReference>
<gene>
    <name evidence="3" type="primary">sdhaf3</name>
    <name evidence="3" type="synonym">acn9</name>
    <name type="ORF">zgc:92826</name>
</gene>
<accession>Q5XIY4</accession>
<evidence type="ECO:0000250" key="1">
    <source>
        <dbReference type="UniProtKB" id="Q04401"/>
    </source>
</evidence>
<evidence type="ECO:0000250" key="2">
    <source>
        <dbReference type="UniProtKB" id="Q8SZ16"/>
    </source>
</evidence>
<evidence type="ECO:0000250" key="3">
    <source>
        <dbReference type="UniProtKB" id="Q9NRP4"/>
    </source>
</evidence>
<evidence type="ECO:0000255" key="4"/>
<evidence type="ECO:0000305" key="5"/>
<keyword id="KW-0143">Chaperone</keyword>
<keyword id="KW-0496">Mitochondrion</keyword>
<keyword id="KW-1185">Reference proteome</keyword>
<keyword id="KW-0809">Transit peptide</keyword>
<name>SDHF3_DANRE</name>
<comment type="function">
    <text evidence="1 2">Plays an essential role in the assembly of succinate dehydrogenase (SDH), an enzyme complex (also referred to as respiratory complex II) that is a component of both the tricarboxylic acid (TCA) cycle and the mitochondrial electron transport chain, and which couples the oxidation of succinate to fumarate with the reduction of ubiquinone (coenzyme Q) to ubiquinol. Promotes maturation of the iron-sulfur protein subunit sdhb of the SDH catalytic dimer, protecting it from the deleterious effects of oxidants. May act together with SDHAF1.</text>
</comment>
<comment type="subunit">
    <text evidence="1">Interacts with sdhb within an sdha-sdhb subcomplex.</text>
</comment>
<comment type="subcellular location">
    <subcellularLocation>
        <location evidence="1">Mitochondrion matrix</location>
    </subcellularLocation>
</comment>
<comment type="similarity">
    <text evidence="5">Belongs to the complex I LYR family. SDHAF3 subfamily.</text>
</comment>
<proteinExistence type="evidence at transcript level"/>
<organism>
    <name type="scientific">Danio rerio</name>
    <name type="common">Zebrafish</name>
    <name type="synonym">Brachydanio rerio</name>
    <dbReference type="NCBI Taxonomy" id="7955"/>
    <lineage>
        <taxon>Eukaryota</taxon>
        <taxon>Metazoa</taxon>
        <taxon>Chordata</taxon>
        <taxon>Craniata</taxon>
        <taxon>Vertebrata</taxon>
        <taxon>Euteleostomi</taxon>
        <taxon>Actinopterygii</taxon>
        <taxon>Neopterygii</taxon>
        <taxon>Teleostei</taxon>
        <taxon>Ostariophysi</taxon>
        <taxon>Cypriniformes</taxon>
        <taxon>Danionidae</taxon>
        <taxon>Danioninae</taxon>
        <taxon>Danio</taxon>
    </lineage>
</organism>
<protein>
    <recommendedName>
        <fullName evidence="1">Succinate dehydrogenase assembly factor 3, mitochondrial</fullName>
        <shortName evidence="1">SDH assembly factor 3</shortName>
        <shortName evidence="1">SDHAF3</shortName>
    </recommendedName>
</protein>
<feature type="transit peptide" description="Mitochondrion" evidence="4">
    <location>
        <begin position="1"/>
        <end position="31"/>
    </location>
</feature>
<feature type="chain" id="PRO_0000042713" description="Succinate dehydrogenase assembly factor 3, mitochondrial">
    <location>
        <begin position="32"/>
        <end position="123"/>
    </location>
</feature>